<accession>P75328</accession>
<reference key="1">
    <citation type="journal article" date="1996" name="Nucleic Acids Res.">
        <title>Complete sequence analysis of the genome of the bacterium Mycoplasma pneumoniae.</title>
        <authorList>
            <person name="Himmelreich R."/>
            <person name="Hilbert H."/>
            <person name="Plagens H."/>
            <person name="Pirkl E."/>
            <person name="Li B.-C."/>
            <person name="Herrmann R."/>
        </authorList>
    </citation>
    <scope>NUCLEOTIDE SEQUENCE [LARGE SCALE GENOMIC DNA]</scope>
    <source>
        <strain>ATCC 29342 / M129 / Subtype 1</strain>
    </source>
</reference>
<gene>
    <name type="ordered locus">MPN_455</name>
    <name type="ORF">H08_orf287</name>
    <name type="ORF">MP386</name>
</gene>
<protein>
    <recommendedName>
        <fullName>Uncharacterized protein MG320 homolog</fullName>
    </recommendedName>
</protein>
<evidence type="ECO:0000255" key="1"/>
<evidence type="ECO:0000305" key="2"/>
<name>Y455_MYCPN</name>
<keyword id="KW-1003">Cell membrane</keyword>
<keyword id="KW-0472">Membrane</keyword>
<keyword id="KW-1185">Reference proteome</keyword>
<keyword id="KW-0812">Transmembrane</keyword>
<keyword id="KW-1133">Transmembrane helix</keyword>
<sequence length="287" mass="32464">MINQANNQVNFSEQQFVHHKRFSVIRLTFSVAAIGILFIFLIGFGVQQLLTNTTSLGTLASDIRTLGTIAFVASLVSLILYFVTAFKLRNRNTTLAWFWGLIIADVISYGITLGVLLTLATTQLRELIDFKFSDIVFAFLGAALVYGTVWGLSALPSQQRRYQQTQTLFRIFIWAFFISIIASLLTFVLNFTVFRGGRTNILDLLFPGLSLIVGGIFSLLSVYFVCLQIRNEQDLVKLYESQDPALAKAQMWRSALFFGAWLVSSFMNLVYFILRIILLTRNLSRAF</sequence>
<organism>
    <name type="scientific">Mycoplasma pneumoniae (strain ATCC 29342 / M129 / Subtype 1)</name>
    <name type="common">Mycoplasmoides pneumoniae</name>
    <dbReference type="NCBI Taxonomy" id="272634"/>
    <lineage>
        <taxon>Bacteria</taxon>
        <taxon>Bacillati</taxon>
        <taxon>Mycoplasmatota</taxon>
        <taxon>Mycoplasmoidales</taxon>
        <taxon>Mycoplasmoidaceae</taxon>
        <taxon>Mycoplasmoides</taxon>
    </lineage>
</organism>
<comment type="subcellular location">
    <subcellularLocation>
        <location evidence="2">Cell membrane</location>
        <topology evidence="2">Multi-pass membrane protein</topology>
    </subcellularLocation>
</comment>
<feature type="chain" id="PRO_0000210537" description="Uncharacterized protein MG320 homolog">
    <location>
        <begin position="1"/>
        <end position="287"/>
    </location>
</feature>
<feature type="transmembrane region" description="Helical" evidence="1">
    <location>
        <begin position="27"/>
        <end position="47"/>
    </location>
</feature>
<feature type="transmembrane region" description="Helical" evidence="1">
    <location>
        <begin position="66"/>
        <end position="86"/>
    </location>
</feature>
<feature type="transmembrane region" description="Helical" evidence="1">
    <location>
        <begin position="97"/>
        <end position="117"/>
    </location>
</feature>
<feature type="transmembrane region" description="Helical" evidence="1">
    <location>
        <begin position="135"/>
        <end position="155"/>
    </location>
</feature>
<feature type="transmembrane region" description="Helical" evidence="1">
    <location>
        <begin position="171"/>
        <end position="191"/>
    </location>
</feature>
<feature type="transmembrane region" description="Helical" evidence="1">
    <location>
        <begin position="205"/>
        <end position="225"/>
    </location>
</feature>
<feature type="transmembrane region" description="Helical" evidence="1">
    <location>
        <begin position="254"/>
        <end position="274"/>
    </location>
</feature>
<proteinExistence type="predicted"/>
<dbReference type="EMBL" id="U00089">
    <property type="protein sequence ID" value="AAB96034.1"/>
    <property type="molecule type" value="Genomic_DNA"/>
</dbReference>
<dbReference type="PIR" id="S73712">
    <property type="entry name" value="S73712"/>
</dbReference>
<dbReference type="RefSeq" id="NP_110143.1">
    <property type="nucleotide sequence ID" value="NC_000912.1"/>
</dbReference>
<dbReference type="RefSeq" id="WP_010874811.1">
    <property type="nucleotide sequence ID" value="NZ_OU342337.1"/>
</dbReference>
<dbReference type="STRING" id="272634.MPN_455"/>
<dbReference type="EnsemblBacteria" id="AAB96034">
    <property type="protein sequence ID" value="AAB96034"/>
    <property type="gene ID" value="MPN_455"/>
</dbReference>
<dbReference type="KEGG" id="mpn:MPN_455"/>
<dbReference type="PATRIC" id="fig|272634.6.peg.492"/>
<dbReference type="HOGENOM" id="CLU_969170_0_0_14"/>
<dbReference type="OrthoDB" id="9945800at2"/>
<dbReference type="BioCyc" id="MPNE272634:G1GJ3-735-MONOMER"/>
<dbReference type="Proteomes" id="UP000000808">
    <property type="component" value="Chromosome"/>
</dbReference>
<dbReference type="GO" id="GO:0005886">
    <property type="term" value="C:plasma membrane"/>
    <property type="evidence" value="ECO:0007669"/>
    <property type="project" value="UniProtKB-SubCell"/>
</dbReference>